<comment type="similarity">
    <text evidence="1">Belongs to the universal ribosomal protein uL29 family.</text>
</comment>
<evidence type="ECO:0000255" key="1">
    <source>
        <dbReference type="HAMAP-Rule" id="MF_00374"/>
    </source>
</evidence>
<evidence type="ECO:0000305" key="2"/>
<dbReference type="EMBL" id="CP000261">
    <property type="protein sequence ID" value="ABF35108.1"/>
    <property type="molecule type" value="Genomic_DNA"/>
</dbReference>
<dbReference type="SMR" id="Q1JE50"/>
<dbReference type="KEGG" id="spj:MGAS2096_Spy0056"/>
<dbReference type="HOGENOM" id="CLU_158491_5_2_9"/>
<dbReference type="GO" id="GO:0022625">
    <property type="term" value="C:cytosolic large ribosomal subunit"/>
    <property type="evidence" value="ECO:0007669"/>
    <property type="project" value="TreeGrafter"/>
</dbReference>
<dbReference type="GO" id="GO:0003735">
    <property type="term" value="F:structural constituent of ribosome"/>
    <property type="evidence" value="ECO:0007669"/>
    <property type="project" value="InterPro"/>
</dbReference>
<dbReference type="GO" id="GO:0006412">
    <property type="term" value="P:translation"/>
    <property type="evidence" value="ECO:0007669"/>
    <property type="project" value="UniProtKB-UniRule"/>
</dbReference>
<dbReference type="CDD" id="cd00427">
    <property type="entry name" value="Ribosomal_L29_HIP"/>
    <property type="match status" value="1"/>
</dbReference>
<dbReference type="FunFam" id="1.10.287.310:FF:000001">
    <property type="entry name" value="50S ribosomal protein L29"/>
    <property type="match status" value="1"/>
</dbReference>
<dbReference type="Gene3D" id="1.10.287.310">
    <property type="match status" value="1"/>
</dbReference>
<dbReference type="HAMAP" id="MF_00374">
    <property type="entry name" value="Ribosomal_uL29"/>
    <property type="match status" value="1"/>
</dbReference>
<dbReference type="InterPro" id="IPR050063">
    <property type="entry name" value="Ribosomal_protein_uL29"/>
</dbReference>
<dbReference type="InterPro" id="IPR001854">
    <property type="entry name" value="Ribosomal_uL29"/>
</dbReference>
<dbReference type="InterPro" id="IPR018254">
    <property type="entry name" value="Ribosomal_uL29_CS"/>
</dbReference>
<dbReference type="InterPro" id="IPR036049">
    <property type="entry name" value="Ribosomal_uL29_sf"/>
</dbReference>
<dbReference type="NCBIfam" id="TIGR00012">
    <property type="entry name" value="L29"/>
    <property type="match status" value="1"/>
</dbReference>
<dbReference type="PANTHER" id="PTHR10916">
    <property type="entry name" value="60S RIBOSOMAL PROTEIN L35/50S RIBOSOMAL PROTEIN L29"/>
    <property type="match status" value="1"/>
</dbReference>
<dbReference type="PANTHER" id="PTHR10916:SF0">
    <property type="entry name" value="LARGE RIBOSOMAL SUBUNIT PROTEIN UL29C"/>
    <property type="match status" value="1"/>
</dbReference>
<dbReference type="Pfam" id="PF00831">
    <property type="entry name" value="Ribosomal_L29"/>
    <property type="match status" value="1"/>
</dbReference>
<dbReference type="SUPFAM" id="SSF46561">
    <property type="entry name" value="Ribosomal protein L29 (L29p)"/>
    <property type="match status" value="1"/>
</dbReference>
<dbReference type="PROSITE" id="PS00579">
    <property type="entry name" value="RIBOSOMAL_L29"/>
    <property type="match status" value="1"/>
</dbReference>
<feature type="chain" id="PRO_1000007624" description="Large ribosomal subunit protein uL29">
    <location>
        <begin position="1"/>
        <end position="68"/>
    </location>
</feature>
<reference key="1">
    <citation type="journal article" date="2006" name="Proc. Natl. Acad. Sci. U.S.A.">
        <title>Molecular genetic anatomy of inter- and intraserotype variation in the human bacterial pathogen group A Streptococcus.</title>
        <authorList>
            <person name="Beres S.B."/>
            <person name="Richter E.W."/>
            <person name="Nagiec M.J."/>
            <person name="Sumby P."/>
            <person name="Porcella S.F."/>
            <person name="DeLeo F.R."/>
            <person name="Musser J.M."/>
        </authorList>
    </citation>
    <scope>NUCLEOTIDE SEQUENCE [LARGE SCALE GENOMIC DNA]</scope>
    <source>
        <strain>MGAS2096</strain>
    </source>
</reference>
<gene>
    <name evidence="1" type="primary">rpmC</name>
    <name type="ordered locus">MGAS2096_Spy0056</name>
</gene>
<name>RL29_STRPB</name>
<keyword id="KW-0687">Ribonucleoprotein</keyword>
<keyword id="KW-0689">Ribosomal protein</keyword>
<sequence length="68" mass="7962">MKLQEIKDFVKELRGLSQEELAKKENELKKELFDLRFQAAAGQLEKTARLDEVKKQIARVKTVQSEMK</sequence>
<protein>
    <recommendedName>
        <fullName evidence="1">Large ribosomal subunit protein uL29</fullName>
    </recommendedName>
    <alternativeName>
        <fullName evidence="2">50S ribosomal protein L29</fullName>
    </alternativeName>
</protein>
<accession>Q1JE50</accession>
<organism>
    <name type="scientific">Streptococcus pyogenes serotype M12 (strain MGAS2096)</name>
    <dbReference type="NCBI Taxonomy" id="370553"/>
    <lineage>
        <taxon>Bacteria</taxon>
        <taxon>Bacillati</taxon>
        <taxon>Bacillota</taxon>
        <taxon>Bacilli</taxon>
        <taxon>Lactobacillales</taxon>
        <taxon>Streptococcaceae</taxon>
        <taxon>Streptococcus</taxon>
    </lineage>
</organism>
<proteinExistence type="inferred from homology"/>